<protein>
    <recommendedName>
        <fullName evidence="1">ATP-dependent zinc metalloprotease FtsH</fullName>
        <ecNumber evidence="1">3.4.24.-</ecNumber>
    </recommendedName>
</protein>
<evidence type="ECO:0000255" key="1">
    <source>
        <dbReference type="HAMAP-Rule" id="MF_01458"/>
    </source>
</evidence>
<evidence type="ECO:0000256" key="2">
    <source>
        <dbReference type="SAM" id="MobiDB-lite"/>
    </source>
</evidence>
<evidence type="ECO:0000269" key="3">
    <source>
    </source>
</evidence>
<name>FTSH_LACPL</name>
<feature type="chain" id="PRO_0000400346" description="ATP-dependent zinc metalloprotease FtsH">
    <location>
        <begin position="1"/>
        <end position="745"/>
    </location>
</feature>
<feature type="topological domain" description="Cytoplasmic" evidence="1">
    <location>
        <begin position="1"/>
        <end position="11"/>
    </location>
</feature>
<feature type="transmembrane region" description="Helical" evidence="1">
    <location>
        <begin position="12"/>
        <end position="32"/>
    </location>
</feature>
<feature type="topological domain" description="Extracellular" evidence="1">
    <location>
        <begin position="33"/>
        <end position="131"/>
    </location>
</feature>
<feature type="transmembrane region" description="Helical" evidence="1">
    <location>
        <begin position="132"/>
        <end position="152"/>
    </location>
</feature>
<feature type="topological domain" description="Cytoplasmic" evidence="1">
    <location>
        <begin position="153"/>
        <end position="745"/>
    </location>
</feature>
<feature type="region of interest" description="Disordered" evidence="2">
    <location>
        <begin position="630"/>
        <end position="745"/>
    </location>
</feature>
<feature type="compositionally biased region" description="Basic and acidic residues" evidence="2">
    <location>
        <begin position="630"/>
        <end position="673"/>
    </location>
</feature>
<feature type="compositionally biased region" description="Low complexity" evidence="2">
    <location>
        <begin position="690"/>
        <end position="704"/>
    </location>
</feature>
<feature type="compositionally biased region" description="Polar residues" evidence="2">
    <location>
        <begin position="705"/>
        <end position="745"/>
    </location>
</feature>
<feature type="active site" evidence="1">
    <location>
        <position position="450"/>
    </location>
</feature>
<feature type="binding site" evidence="1">
    <location>
        <begin position="227"/>
        <end position="234"/>
    </location>
    <ligand>
        <name>ATP</name>
        <dbReference type="ChEBI" id="CHEBI:30616"/>
    </ligand>
</feature>
<feature type="binding site" evidence="1">
    <location>
        <position position="449"/>
    </location>
    <ligand>
        <name>Zn(2+)</name>
        <dbReference type="ChEBI" id="CHEBI:29105"/>
        <note>catalytic</note>
    </ligand>
</feature>
<feature type="binding site" evidence="1">
    <location>
        <position position="453"/>
    </location>
    <ligand>
        <name>Zn(2+)</name>
        <dbReference type="ChEBI" id="CHEBI:29105"/>
        <note>catalytic</note>
    </ligand>
</feature>
<feature type="binding site" evidence="1">
    <location>
        <position position="525"/>
    </location>
    <ligand>
        <name>Zn(2+)</name>
        <dbReference type="ChEBI" id="CHEBI:29105"/>
        <note>catalytic</note>
    </ligand>
</feature>
<accession>Q88Z31</accession>
<accession>F9UL20</accession>
<organism>
    <name type="scientific">Lactiplantibacillus plantarum (strain ATCC BAA-793 / NCIMB 8826 / WCFS1)</name>
    <name type="common">Lactobacillus plantarum</name>
    <dbReference type="NCBI Taxonomy" id="220668"/>
    <lineage>
        <taxon>Bacteria</taxon>
        <taxon>Bacillati</taxon>
        <taxon>Bacillota</taxon>
        <taxon>Bacilli</taxon>
        <taxon>Lactobacillales</taxon>
        <taxon>Lactobacillaceae</taxon>
        <taxon>Lactiplantibacillus</taxon>
    </lineage>
</organism>
<proteinExistence type="evidence at transcript level"/>
<gene>
    <name evidence="1" type="primary">ftsH</name>
    <name type="ordered locus">lp_0547</name>
</gene>
<dbReference type="EC" id="3.4.24.-" evidence="1"/>
<dbReference type="EMBL" id="AY644764">
    <property type="protein sequence ID" value="AAU05734.1"/>
    <property type="molecule type" value="Genomic_DNA"/>
</dbReference>
<dbReference type="EMBL" id="AL935263">
    <property type="protein sequence ID" value="CCC78035.1"/>
    <property type="molecule type" value="Genomic_DNA"/>
</dbReference>
<dbReference type="RefSeq" id="WP_003643854.1">
    <property type="nucleotide sequence ID" value="NC_004567.2"/>
</dbReference>
<dbReference type="RefSeq" id="YP_004888549.1">
    <property type="nucleotide sequence ID" value="NC_004567.2"/>
</dbReference>
<dbReference type="SMR" id="Q88Z31"/>
<dbReference type="STRING" id="220668.lp_0547"/>
<dbReference type="MEROPS" id="M41.009"/>
<dbReference type="EnsemblBacteria" id="CCC78035">
    <property type="protein sequence ID" value="CCC78035"/>
    <property type="gene ID" value="lp_0547"/>
</dbReference>
<dbReference type="GeneID" id="89668191"/>
<dbReference type="KEGG" id="lpl:lp_0547"/>
<dbReference type="PATRIC" id="fig|220668.9.peg.453"/>
<dbReference type="eggNOG" id="COG0465">
    <property type="taxonomic scope" value="Bacteria"/>
</dbReference>
<dbReference type="HOGENOM" id="CLU_000688_16_2_9"/>
<dbReference type="OrthoDB" id="9809379at2"/>
<dbReference type="PhylomeDB" id="Q88Z31"/>
<dbReference type="Proteomes" id="UP000000432">
    <property type="component" value="Chromosome"/>
</dbReference>
<dbReference type="GO" id="GO:0005886">
    <property type="term" value="C:plasma membrane"/>
    <property type="evidence" value="ECO:0007669"/>
    <property type="project" value="UniProtKB-SubCell"/>
</dbReference>
<dbReference type="GO" id="GO:0005524">
    <property type="term" value="F:ATP binding"/>
    <property type="evidence" value="ECO:0007669"/>
    <property type="project" value="UniProtKB-UniRule"/>
</dbReference>
<dbReference type="GO" id="GO:0016887">
    <property type="term" value="F:ATP hydrolysis activity"/>
    <property type="evidence" value="ECO:0007669"/>
    <property type="project" value="UniProtKB-UniRule"/>
</dbReference>
<dbReference type="GO" id="GO:0004176">
    <property type="term" value="F:ATP-dependent peptidase activity"/>
    <property type="evidence" value="ECO:0007669"/>
    <property type="project" value="InterPro"/>
</dbReference>
<dbReference type="GO" id="GO:0004222">
    <property type="term" value="F:metalloendopeptidase activity"/>
    <property type="evidence" value="ECO:0007669"/>
    <property type="project" value="InterPro"/>
</dbReference>
<dbReference type="GO" id="GO:0008270">
    <property type="term" value="F:zinc ion binding"/>
    <property type="evidence" value="ECO:0007669"/>
    <property type="project" value="UniProtKB-UniRule"/>
</dbReference>
<dbReference type="GO" id="GO:0030163">
    <property type="term" value="P:protein catabolic process"/>
    <property type="evidence" value="ECO:0007669"/>
    <property type="project" value="UniProtKB-UniRule"/>
</dbReference>
<dbReference type="GO" id="GO:0006508">
    <property type="term" value="P:proteolysis"/>
    <property type="evidence" value="ECO:0007669"/>
    <property type="project" value="UniProtKB-KW"/>
</dbReference>
<dbReference type="CDD" id="cd19501">
    <property type="entry name" value="RecA-like_FtsH"/>
    <property type="match status" value="1"/>
</dbReference>
<dbReference type="FunFam" id="1.10.8.60:FF:000001">
    <property type="entry name" value="ATP-dependent zinc metalloprotease FtsH"/>
    <property type="match status" value="1"/>
</dbReference>
<dbReference type="FunFam" id="1.20.58.760:FF:000001">
    <property type="entry name" value="ATP-dependent zinc metalloprotease FtsH"/>
    <property type="match status" value="1"/>
</dbReference>
<dbReference type="FunFam" id="3.40.50.300:FF:000001">
    <property type="entry name" value="ATP-dependent zinc metalloprotease FtsH"/>
    <property type="match status" value="1"/>
</dbReference>
<dbReference type="Gene3D" id="1.10.8.60">
    <property type="match status" value="1"/>
</dbReference>
<dbReference type="Gene3D" id="3.30.720.210">
    <property type="match status" value="1"/>
</dbReference>
<dbReference type="Gene3D" id="3.40.50.300">
    <property type="entry name" value="P-loop containing nucleotide triphosphate hydrolases"/>
    <property type="match status" value="1"/>
</dbReference>
<dbReference type="Gene3D" id="1.20.58.760">
    <property type="entry name" value="Peptidase M41"/>
    <property type="match status" value="1"/>
</dbReference>
<dbReference type="HAMAP" id="MF_01458">
    <property type="entry name" value="FtsH"/>
    <property type="match status" value="1"/>
</dbReference>
<dbReference type="InterPro" id="IPR003593">
    <property type="entry name" value="AAA+_ATPase"/>
</dbReference>
<dbReference type="InterPro" id="IPR041569">
    <property type="entry name" value="AAA_lid_3"/>
</dbReference>
<dbReference type="InterPro" id="IPR003959">
    <property type="entry name" value="ATPase_AAA_core"/>
</dbReference>
<dbReference type="InterPro" id="IPR003960">
    <property type="entry name" value="ATPase_AAA_CS"/>
</dbReference>
<dbReference type="InterPro" id="IPR005936">
    <property type="entry name" value="FtsH"/>
</dbReference>
<dbReference type="InterPro" id="IPR027417">
    <property type="entry name" value="P-loop_NTPase"/>
</dbReference>
<dbReference type="InterPro" id="IPR011546">
    <property type="entry name" value="Pept_M41_FtsH_extracell"/>
</dbReference>
<dbReference type="InterPro" id="IPR000642">
    <property type="entry name" value="Peptidase_M41"/>
</dbReference>
<dbReference type="InterPro" id="IPR037219">
    <property type="entry name" value="Peptidase_M41-like"/>
</dbReference>
<dbReference type="NCBIfam" id="TIGR01241">
    <property type="entry name" value="FtsH_fam"/>
    <property type="match status" value="1"/>
</dbReference>
<dbReference type="PANTHER" id="PTHR23076:SF113">
    <property type="entry name" value="ATP-DEPENDENT ZINC METALLOPROTEASE FTSH 1, CHLOROPLASTIC-RELATED"/>
    <property type="match status" value="1"/>
</dbReference>
<dbReference type="PANTHER" id="PTHR23076">
    <property type="entry name" value="METALLOPROTEASE M41 FTSH"/>
    <property type="match status" value="1"/>
</dbReference>
<dbReference type="Pfam" id="PF00004">
    <property type="entry name" value="AAA"/>
    <property type="match status" value="1"/>
</dbReference>
<dbReference type="Pfam" id="PF17862">
    <property type="entry name" value="AAA_lid_3"/>
    <property type="match status" value="1"/>
</dbReference>
<dbReference type="Pfam" id="PF06480">
    <property type="entry name" value="FtsH_ext"/>
    <property type="match status" value="1"/>
</dbReference>
<dbReference type="Pfam" id="PF01434">
    <property type="entry name" value="Peptidase_M41"/>
    <property type="match status" value="1"/>
</dbReference>
<dbReference type="SMART" id="SM00382">
    <property type="entry name" value="AAA"/>
    <property type="match status" value="1"/>
</dbReference>
<dbReference type="SUPFAM" id="SSF140990">
    <property type="entry name" value="FtsH protease domain-like"/>
    <property type="match status" value="1"/>
</dbReference>
<dbReference type="SUPFAM" id="SSF52540">
    <property type="entry name" value="P-loop containing nucleoside triphosphate hydrolases"/>
    <property type="match status" value="1"/>
</dbReference>
<dbReference type="PROSITE" id="PS00674">
    <property type="entry name" value="AAA"/>
    <property type="match status" value="1"/>
</dbReference>
<reference key="1">
    <citation type="journal article" date="2003" name="Proc. Natl. Acad. Sci. U.S.A.">
        <title>Complete genome sequence of Lactobacillus plantarum WCFS1.</title>
        <authorList>
            <person name="Kleerebezem M."/>
            <person name="Boekhorst J."/>
            <person name="van Kranenburg R."/>
            <person name="Molenaar D."/>
            <person name="Kuipers O.P."/>
            <person name="Leer R."/>
            <person name="Tarchini R."/>
            <person name="Peters S.A."/>
            <person name="Sandbrink H.M."/>
            <person name="Fiers M.W.E.J."/>
            <person name="Stiekema W."/>
            <person name="Klein Lankhorst R.M."/>
            <person name="Bron P.A."/>
            <person name="Hoffer S.M."/>
            <person name="Nierop Groot M.N."/>
            <person name="Kerkhoven R."/>
            <person name="De Vries M."/>
            <person name="Ursing B."/>
            <person name="De Vos W.M."/>
            <person name="Siezen R.J."/>
        </authorList>
    </citation>
    <scope>NUCLEOTIDE SEQUENCE [LARGE SCALE GENOMIC DNA]</scope>
    <source>
        <strain>ATCC BAA-793 / NCIMB 8826 / WCFS1</strain>
    </source>
</reference>
<reference key="2">
    <citation type="journal article" date="2012" name="J. Bacteriol.">
        <title>Complete resequencing and reannotation of the Lactobacillus plantarum WCFS1 genome.</title>
        <authorList>
            <person name="Siezen R.J."/>
            <person name="Francke C."/>
            <person name="Renckens B."/>
            <person name="Boekhorst J."/>
            <person name="Wels M."/>
            <person name="Kleerebezem M."/>
            <person name="van Hijum S.A."/>
        </authorList>
    </citation>
    <scope>NUCLEOTIDE SEQUENCE [LARGE SCALE GENOMIC DNA]</scope>
    <scope>GENOME REANNOTATION</scope>
    <source>
        <strain>ATCC BAA-793 / NCIMB 8826 / WCFS1</strain>
    </source>
</reference>
<reference key="3">
    <citation type="journal article" date="2009" name="J. Bacteriol.">
        <title>The Lactobacillus plantarum ftsH gene is a novel member of the CtsR stress response regulon.</title>
        <authorList>
            <person name="Fiocco D."/>
            <person name="Collins M."/>
            <person name="Muscariello L."/>
            <person name="Hols P."/>
            <person name="Kleerebezem M."/>
            <person name="Msadek T."/>
            <person name="Spano G."/>
        </authorList>
    </citation>
    <scope>INDUCTION</scope>
    <scope>DISRUPTION PHENOTYPE</scope>
    <source>
        <strain>ATCC BAA-793 / NCIMB 8826 / WCFS1</strain>
    </source>
</reference>
<keyword id="KW-0067">ATP-binding</keyword>
<keyword id="KW-1003">Cell membrane</keyword>
<keyword id="KW-0378">Hydrolase</keyword>
<keyword id="KW-0472">Membrane</keyword>
<keyword id="KW-0479">Metal-binding</keyword>
<keyword id="KW-0482">Metalloprotease</keyword>
<keyword id="KW-0547">Nucleotide-binding</keyword>
<keyword id="KW-0645">Protease</keyword>
<keyword id="KW-1185">Reference proteome</keyword>
<keyword id="KW-0346">Stress response</keyword>
<keyword id="KW-0812">Transmembrane</keyword>
<keyword id="KW-1133">Transmembrane helix</keyword>
<keyword id="KW-0862">Zinc</keyword>
<comment type="function">
    <text evidence="1">Acts as a processive, ATP-dependent zinc metallopeptidase for both cytoplasmic and membrane proteins. Plays a role in the quality control of integral membrane proteins.</text>
</comment>
<comment type="cofactor">
    <cofactor evidence="1">
        <name>Zn(2+)</name>
        <dbReference type="ChEBI" id="CHEBI:29105"/>
    </cofactor>
    <text evidence="1">Binds 1 zinc ion per subunit.</text>
</comment>
<comment type="subunit">
    <text evidence="1">Homohexamer.</text>
</comment>
<comment type="subcellular location">
    <subcellularLocation>
        <location evidence="1">Cell membrane</location>
        <topology evidence="1">Multi-pass membrane protein</topology>
        <orientation evidence="1">Cytoplasmic side</orientation>
    </subcellularLocation>
</comment>
<comment type="induction">
    <text evidence="3">Expressed at a low constitutive level, expression is increased after exposure to 42 degrees Celsius. Transcription is partially repressed by CtsR.</text>
</comment>
<comment type="disruption phenotype">
    <text evidence="3">Cells grow more slowly under optimal conditions, and much mre slowly at 42 degrees Celsius.</text>
</comment>
<comment type="similarity">
    <text evidence="1">In the central section; belongs to the AAA ATPase family.</text>
</comment>
<comment type="similarity">
    <text evidence="1">In the C-terminal section; belongs to the peptidase M41 family.</text>
</comment>
<sequence>MNNRRNGLFRNSLFYILMFLSLMGIIYFFFGGNSGSQTQNIRYSEFVKQLDKNNVKNVSIQPSGGVYKVTGSYRKARTTSSANALGIKSASTKTTSFSTTMLENNSTVDQVSKLAAKHDVKVTAKAEESSGIWVTLLMYIAPVILMLFLFYMMMGQAGQGGGNNRVMNFGKTKAKPADSKQNKVRFSDVAGEEEEKQELVEVVEFLKDPRKFVSLGARIPSGVLLEGPPGTGKTLLAKAVAGEAGVPFFSISGSDFVEMFVGVGASRVRDLFEQAKKNAPSIIFIDEIDAVGRQRGNGMGGGHDEREQTLNQLLVEMDGFTGNEGVIVMAATNRSDVLDPALLRPGRFDRKILVGRPDVKGREAILKVHAKNKPLAADVDLKEIAKQTPGFVGADLENLLNEAALLAARRNKKQVDAADLDEAEDRVIAGPAKHDRVVNKHERETVAYHEAGHTIVGLVLNDARVVHKVTIVPRGRAGGYAIMLPREDQMLMSKRDAKEQMAGLMGGRAAEEIIFGAQSSGASNDFEQATQIARAMVTQYGMSEKLGPVELENANQQAAYQQGMGASAFSQHTAQLIDDEVRRLSQEAHQTATDIIESHREQHKLIAEALLKYETLDEKQILSLFKTGKMPEKDSNEFPSEKAATFEESKRELERREAEKHAQNQSADDKQADSADTTTNVSVAEPSFPSESDASSEVSADSSVNSTANSATESATDSDVATSATGLPNAESATPSSQDDTNSQA</sequence>